<accession>Q57DG4</accession>
<gene>
    <name evidence="1" type="primary">mobA</name>
    <name type="ordered locus">BruAb1_0963</name>
</gene>
<name>MOBA_BRUAB</name>
<comment type="function">
    <text evidence="1">Transfers a GMP moiety from GTP to Mo-molybdopterin (Mo-MPT) cofactor (Moco or molybdenum cofactor) to form Mo-molybdopterin guanine dinucleotide (Mo-MGD) cofactor.</text>
</comment>
<comment type="catalytic activity">
    <reaction evidence="1">
        <text>Mo-molybdopterin + GTP + H(+) = Mo-molybdopterin guanine dinucleotide + diphosphate</text>
        <dbReference type="Rhea" id="RHEA:34243"/>
        <dbReference type="ChEBI" id="CHEBI:15378"/>
        <dbReference type="ChEBI" id="CHEBI:33019"/>
        <dbReference type="ChEBI" id="CHEBI:37565"/>
        <dbReference type="ChEBI" id="CHEBI:71302"/>
        <dbReference type="ChEBI" id="CHEBI:71310"/>
        <dbReference type="EC" id="2.7.7.77"/>
    </reaction>
</comment>
<comment type="cofactor">
    <cofactor evidence="1">
        <name>Mg(2+)</name>
        <dbReference type="ChEBI" id="CHEBI:18420"/>
    </cofactor>
</comment>
<comment type="subunit">
    <text evidence="1">Monomer.</text>
</comment>
<comment type="subcellular location">
    <subcellularLocation>
        <location evidence="1">Cytoplasm</location>
    </subcellularLocation>
</comment>
<comment type="domain">
    <text evidence="1">The N-terminal domain determines nucleotide recognition and specific binding, while the C-terminal domain determines the specific binding to the target protein.</text>
</comment>
<comment type="similarity">
    <text evidence="1">Belongs to the MobA family.</text>
</comment>
<keyword id="KW-0963">Cytoplasm</keyword>
<keyword id="KW-0342">GTP-binding</keyword>
<keyword id="KW-0460">Magnesium</keyword>
<keyword id="KW-0479">Metal-binding</keyword>
<keyword id="KW-0501">Molybdenum cofactor biosynthesis</keyword>
<keyword id="KW-0547">Nucleotide-binding</keyword>
<keyword id="KW-0808">Transferase</keyword>
<organism>
    <name type="scientific">Brucella abortus biovar 1 (strain 9-941)</name>
    <dbReference type="NCBI Taxonomy" id="262698"/>
    <lineage>
        <taxon>Bacteria</taxon>
        <taxon>Pseudomonadati</taxon>
        <taxon>Pseudomonadota</taxon>
        <taxon>Alphaproteobacteria</taxon>
        <taxon>Hyphomicrobiales</taxon>
        <taxon>Brucellaceae</taxon>
        <taxon>Brucella/Ochrobactrum group</taxon>
        <taxon>Brucella</taxon>
    </lineage>
</organism>
<proteinExistence type="inferred from homology"/>
<protein>
    <recommendedName>
        <fullName evidence="1">Molybdenum cofactor guanylyltransferase</fullName>
        <shortName evidence="1">MoCo guanylyltransferase</shortName>
        <ecNumber evidence="1">2.7.7.77</ecNumber>
    </recommendedName>
    <alternativeName>
        <fullName evidence="1">GTP:molybdopterin guanylyltransferase</fullName>
    </alternativeName>
    <alternativeName>
        <fullName evidence="1">Mo-MPT guanylyltransferase</fullName>
    </alternativeName>
    <alternativeName>
        <fullName evidence="1">Molybdopterin guanylyltransferase</fullName>
    </alternativeName>
    <alternativeName>
        <fullName evidence="1">Molybdopterin-guanine dinucleotide synthase</fullName>
        <shortName evidence="1">MGD synthase</shortName>
    </alternativeName>
</protein>
<feature type="chain" id="PRO_1000019106" description="Molybdenum cofactor guanylyltransferase">
    <location>
        <begin position="1"/>
        <end position="221"/>
    </location>
</feature>
<feature type="binding site" evidence="1">
    <location>
        <begin position="18"/>
        <end position="20"/>
    </location>
    <ligand>
        <name>GTP</name>
        <dbReference type="ChEBI" id="CHEBI:37565"/>
    </ligand>
</feature>
<feature type="binding site" evidence="1">
    <location>
        <position position="35"/>
    </location>
    <ligand>
        <name>GTP</name>
        <dbReference type="ChEBI" id="CHEBI:37565"/>
    </ligand>
</feature>
<feature type="binding site" evidence="1">
    <location>
        <position position="63"/>
    </location>
    <ligand>
        <name>GTP</name>
        <dbReference type="ChEBI" id="CHEBI:37565"/>
    </ligand>
</feature>
<feature type="binding site" evidence="1">
    <location>
        <position position="81"/>
    </location>
    <ligand>
        <name>GTP</name>
        <dbReference type="ChEBI" id="CHEBI:37565"/>
    </ligand>
</feature>
<feature type="binding site" evidence="1">
    <location>
        <position position="112"/>
    </location>
    <ligand>
        <name>GTP</name>
        <dbReference type="ChEBI" id="CHEBI:37565"/>
    </ligand>
</feature>
<feature type="binding site" evidence="1">
    <location>
        <position position="112"/>
    </location>
    <ligand>
        <name>Mg(2+)</name>
        <dbReference type="ChEBI" id="CHEBI:18420"/>
    </ligand>
</feature>
<dbReference type="EC" id="2.7.7.77" evidence="1"/>
<dbReference type="EMBL" id="AE017223">
    <property type="protein sequence ID" value="AAX74320.1"/>
    <property type="molecule type" value="Genomic_DNA"/>
</dbReference>
<dbReference type="RefSeq" id="WP_002964077.1">
    <property type="nucleotide sequence ID" value="NC_006932.1"/>
</dbReference>
<dbReference type="SMR" id="Q57DG4"/>
<dbReference type="EnsemblBacteria" id="AAX74320">
    <property type="protein sequence ID" value="AAX74320"/>
    <property type="gene ID" value="BruAb1_0963"/>
</dbReference>
<dbReference type="KEGG" id="bmb:BruAb1_0963"/>
<dbReference type="HOGENOM" id="CLU_055597_5_0_5"/>
<dbReference type="Proteomes" id="UP000000540">
    <property type="component" value="Chromosome I"/>
</dbReference>
<dbReference type="GO" id="GO:0005737">
    <property type="term" value="C:cytoplasm"/>
    <property type="evidence" value="ECO:0007669"/>
    <property type="project" value="UniProtKB-SubCell"/>
</dbReference>
<dbReference type="GO" id="GO:0005525">
    <property type="term" value="F:GTP binding"/>
    <property type="evidence" value="ECO:0007669"/>
    <property type="project" value="UniProtKB-UniRule"/>
</dbReference>
<dbReference type="GO" id="GO:0046872">
    <property type="term" value="F:metal ion binding"/>
    <property type="evidence" value="ECO:0007669"/>
    <property type="project" value="UniProtKB-KW"/>
</dbReference>
<dbReference type="GO" id="GO:0061603">
    <property type="term" value="F:molybdenum cofactor guanylyltransferase activity"/>
    <property type="evidence" value="ECO:0007669"/>
    <property type="project" value="UniProtKB-EC"/>
</dbReference>
<dbReference type="GO" id="GO:1902758">
    <property type="term" value="P:bis(molybdopterin guanine dinucleotide)molybdenum biosynthetic process"/>
    <property type="evidence" value="ECO:0007669"/>
    <property type="project" value="TreeGrafter"/>
</dbReference>
<dbReference type="CDD" id="cd02503">
    <property type="entry name" value="MobA"/>
    <property type="match status" value="1"/>
</dbReference>
<dbReference type="Gene3D" id="3.90.550.10">
    <property type="entry name" value="Spore Coat Polysaccharide Biosynthesis Protein SpsA, Chain A"/>
    <property type="match status" value="1"/>
</dbReference>
<dbReference type="HAMAP" id="MF_00316">
    <property type="entry name" value="MobA"/>
    <property type="match status" value="1"/>
</dbReference>
<dbReference type="InterPro" id="IPR025877">
    <property type="entry name" value="MobA-like_NTP_Trfase"/>
</dbReference>
<dbReference type="InterPro" id="IPR013482">
    <property type="entry name" value="Molybde_CF_guanTrfase"/>
</dbReference>
<dbReference type="InterPro" id="IPR029044">
    <property type="entry name" value="Nucleotide-diphossugar_trans"/>
</dbReference>
<dbReference type="PANTHER" id="PTHR19136">
    <property type="entry name" value="MOLYBDENUM COFACTOR GUANYLYLTRANSFERASE"/>
    <property type="match status" value="1"/>
</dbReference>
<dbReference type="PANTHER" id="PTHR19136:SF81">
    <property type="entry name" value="MOLYBDENUM COFACTOR GUANYLYLTRANSFERASE"/>
    <property type="match status" value="1"/>
</dbReference>
<dbReference type="Pfam" id="PF12804">
    <property type="entry name" value="NTP_transf_3"/>
    <property type="match status" value="1"/>
</dbReference>
<dbReference type="SUPFAM" id="SSF53448">
    <property type="entry name" value="Nucleotide-diphospho-sugar transferases"/>
    <property type="match status" value="1"/>
</dbReference>
<sequence length="221" mass="23735">MRAGQPKITGAKITGAIIAGGQSSRMQAGGVSGDKFLQPLGSAPVIAHVIARLQPQVDTLFINSKGDLSRFAAFGLPAVKDIAMNHGGPLVGLLTCLAHASPCRLLLTSAADTPFLPCDLASNLIRKQAETGARIILACSNERVHPIVGLWHTDLVPDLEKWLQHAEKASIFWFAKHIGFEVVNIPLAHAPRLAESYDPFFNINLPDDLLKAREINEALQA</sequence>
<evidence type="ECO:0000255" key="1">
    <source>
        <dbReference type="HAMAP-Rule" id="MF_00316"/>
    </source>
</evidence>
<reference key="1">
    <citation type="journal article" date="2005" name="J. Bacteriol.">
        <title>Completion of the genome sequence of Brucella abortus and comparison to the highly similar genomes of Brucella melitensis and Brucella suis.</title>
        <authorList>
            <person name="Halling S.M."/>
            <person name="Peterson-Burch B.D."/>
            <person name="Bricker B.J."/>
            <person name="Zuerner R.L."/>
            <person name="Qing Z."/>
            <person name="Li L.-L."/>
            <person name="Kapur V."/>
            <person name="Alt D.P."/>
            <person name="Olsen S.C."/>
        </authorList>
    </citation>
    <scope>NUCLEOTIDE SEQUENCE [LARGE SCALE GENOMIC DNA]</scope>
    <source>
        <strain>9-941</strain>
    </source>
</reference>